<comment type="subcellular location">
    <subcellularLocation>
        <location evidence="1">Membrane</location>
        <topology evidence="1">Single-pass membrane protein</topology>
    </subcellularLocation>
</comment>
<comment type="similarity">
    <text evidence="1">Belongs to the UPF0154 family.</text>
</comment>
<organism>
    <name type="scientific">Staphylococcus epidermidis (strain ATCC 35984 / DSM 28319 / BCRC 17069 / CCUG 31568 / BM 3577 / RP62A)</name>
    <dbReference type="NCBI Taxonomy" id="176279"/>
    <lineage>
        <taxon>Bacteria</taxon>
        <taxon>Bacillati</taxon>
        <taxon>Bacillota</taxon>
        <taxon>Bacilli</taxon>
        <taxon>Bacillales</taxon>
        <taxon>Staphylococcaceae</taxon>
        <taxon>Staphylococcus</taxon>
    </lineage>
</organism>
<accession>Q5HPJ7</accession>
<keyword id="KW-0472">Membrane</keyword>
<keyword id="KW-1185">Reference proteome</keyword>
<keyword id="KW-0812">Transmembrane</keyword>
<keyword id="KW-1133">Transmembrane helix</keyword>
<dbReference type="EMBL" id="CP000029">
    <property type="protein sequence ID" value="AAW54289.1"/>
    <property type="molecule type" value="Genomic_DNA"/>
</dbReference>
<dbReference type="RefSeq" id="WP_001831215.1">
    <property type="nucleotide sequence ID" value="NC_002976.3"/>
</dbReference>
<dbReference type="SMR" id="Q5HPJ7"/>
<dbReference type="KEGG" id="ser:SERP0914"/>
<dbReference type="eggNOG" id="COG3763">
    <property type="taxonomic scope" value="Bacteria"/>
</dbReference>
<dbReference type="HOGENOM" id="CLU_180108_0_1_9"/>
<dbReference type="Proteomes" id="UP000000531">
    <property type="component" value="Chromosome"/>
</dbReference>
<dbReference type="GO" id="GO:0005886">
    <property type="term" value="C:plasma membrane"/>
    <property type="evidence" value="ECO:0007669"/>
    <property type="project" value="UniProtKB-UniRule"/>
</dbReference>
<dbReference type="HAMAP" id="MF_00363">
    <property type="entry name" value="UPF0154"/>
    <property type="match status" value="1"/>
</dbReference>
<dbReference type="InterPro" id="IPR005359">
    <property type="entry name" value="UPF0154"/>
</dbReference>
<dbReference type="Pfam" id="PF03672">
    <property type="entry name" value="UPF0154"/>
    <property type="match status" value="1"/>
</dbReference>
<feature type="chain" id="PRO_0000214980" description="UPF0154 protein SERP0914">
    <location>
        <begin position="1"/>
        <end position="75"/>
    </location>
</feature>
<feature type="transmembrane region" description="Helical" evidence="1">
    <location>
        <begin position="3"/>
        <end position="23"/>
    </location>
</feature>
<name>Y914_STAEQ</name>
<gene>
    <name type="ordered locus">SERP0914</name>
</gene>
<reference key="1">
    <citation type="journal article" date="2005" name="J. Bacteriol.">
        <title>Insights on evolution of virulence and resistance from the complete genome analysis of an early methicillin-resistant Staphylococcus aureus strain and a biofilm-producing methicillin-resistant Staphylococcus epidermidis strain.</title>
        <authorList>
            <person name="Gill S.R."/>
            <person name="Fouts D.E."/>
            <person name="Archer G.L."/>
            <person name="Mongodin E.F."/>
            <person name="DeBoy R.T."/>
            <person name="Ravel J."/>
            <person name="Paulsen I.T."/>
            <person name="Kolonay J.F."/>
            <person name="Brinkac L.M."/>
            <person name="Beanan M.J."/>
            <person name="Dodson R.J."/>
            <person name="Daugherty S.C."/>
            <person name="Madupu R."/>
            <person name="Angiuoli S.V."/>
            <person name="Durkin A.S."/>
            <person name="Haft D.H."/>
            <person name="Vamathevan J.J."/>
            <person name="Khouri H."/>
            <person name="Utterback T.R."/>
            <person name="Lee C."/>
            <person name="Dimitrov G."/>
            <person name="Jiang L."/>
            <person name="Qin H."/>
            <person name="Weidman J."/>
            <person name="Tran K."/>
            <person name="Kang K.H."/>
            <person name="Hance I.R."/>
            <person name="Nelson K.E."/>
            <person name="Fraser C.M."/>
        </authorList>
    </citation>
    <scope>NUCLEOTIDE SEQUENCE [LARGE SCALE GENOMIC DNA]</scope>
    <source>
        <strain>ATCC 35984 / DSM 28319 / BCRC 17069 / CCUG 31568 / BM 3577 / RP62A</strain>
    </source>
</reference>
<sequence>MAIWVAIILIVIALIAGLIGGFLLARKYMKDYLKKNPPINEEMLRMMMMQMGQKPSQKKINQMMTMMNKNMNQKM</sequence>
<proteinExistence type="inferred from homology"/>
<evidence type="ECO:0000255" key="1">
    <source>
        <dbReference type="HAMAP-Rule" id="MF_00363"/>
    </source>
</evidence>
<protein>
    <recommendedName>
        <fullName evidence="1">UPF0154 protein SERP0914</fullName>
    </recommendedName>
</protein>